<comment type="function">
    <text evidence="1">Catalyzes the pyruvoyl-dependent decarboxylation of aspartate to produce beta-alanine.</text>
</comment>
<comment type="catalytic activity">
    <reaction evidence="1">
        <text>L-aspartate + H(+) = beta-alanine + CO2</text>
        <dbReference type="Rhea" id="RHEA:19497"/>
        <dbReference type="ChEBI" id="CHEBI:15378"/>
        <dbReference type="ChEBI" id="CHEBI:16526"/>
        <dbReference type="ChEBI" id="CHEBI:29991"/>
        <dbReference type="ChEBI" id="CHEBI:57966"/>
        <dbReference type="EC" id="4.1.1.11"/>
    </reaction>
</comment>
<comment type="cofactor">
    <cofactor evidence="1">
        <name>pyruvate</name>
        <dbReference type="ChEBI" id="CHEBI:15361"/>
    </cofactor>
    <text evidence="1">Binds 1 pyruvoyl group covalently per subunit.</text>
</comment>
<comment type="pathway">
    <text evidence="1">Cofactor biosynthesis; (R)-pantothenate biosynthesis; beta-alanine from L-aspartate: step 1/1.</text>
</comment>
<comment type="subunit">
    <text evidence="1">Heterooctamer of four alpha and four beta subunits.</text>
</comment>
<comment type="subcellular location">
    <subcellularLocation>
        <location evidence="1">Cytoplasm</location>
    </subcellularLocation>
</comment>
<comment type="PTM">
    <text evidence="1">Is synthesized initially as an inactive proenzyme, which is activated by self-cleavage at a specific serine bond to produce a beta-subunit with a hydroxyl group at its C-terminus and an alpha-subunit with a pyruvoyl group at its N-terminus.</text>
</comment>
<comment type="similarity">
    <text evidence="1">Belongs to the PanD family.</text>
</comment>
<organism>
    <name type="scientific">Escherichia coli O8 (strain IAI1)</name>
    <dbReference type="NCBI Taxonomy" id="585034"/>
    <lineage>
        <taxon>Bacteria</taxon>
        <taxon>Pseudomonadati</taxon>
        <taxon>Pseudomonadota</taxon>
        <taxon>Gammaproteobacteria</taxon>
        <taxon>Enterobacterales</taxon>
        <taxon>Enterobacteriaceae</taxon>
        <taxon>Escherichia</taxon>
    </lineage>
</organism>
<gene>
    <name evidence="1" type="primary">panD</name>
    <name type="ordered locus">ECIAI1_0129</name>
</gene>
<keyword id="KW-0068">Autocatalytic cleavage</keyword>
<keyword id="KW-0963">Cytoplasm</keyword>
<keyword id="KW-0210">Decarboxylase</keyword>
<keyword id="KW-0456">Lyase</keyword>
<keyword id="KW-0566">Pantothenate biosynthesis</keyword>
<keyword id="KW-0670">Pyruvate</keyword>
<keyword id="KW-0704">Schiff base</keyword>
<keyword id="KW-0865">Zymogen</keyword>
<accession>B7M172</accession>
<dbReference type="EC" id="4.1.1.11" evidence="1"/>
<dbReference type="EMBL" id="CU928160">
    <property type="protein sequence ID" value="CAQ97018.1"/>
    <property type="molecule type" value="Genomic_DNA"/>
</dbReference>
<dbReference type="RefSeq" id="WP_000621515.1">
    <property type="nucleotide sequence ID" value="NC_011741.1"/>
</dbReference>
<dbReference type="SMR" id="B7M172"/>
<dbReference type="GeneID" id="93777305"/>
<dbReference type="KEGG" id="ecr:ECIAI1_0129"/>
<dbReference type="HOGENOM" id="CLU_115305_2_1_6"/>
<dbReference type="UniPathway" id="UPA00028">
    <property type="reaction ID" value="UER00002"/>
</dbReference>
<dbReference type="GO" id="GO:0005829">
    <property type="term" value="C:cytosol"/>
    <property type="evidence" value="ECO:0007669"/>
    <property type="project" value="TreeGrafter"/>
</dbReference>
<dbReference type="GO" id="GO:0004068">
    <property type="term" value="F:aspartate 1-decarboxylase activity"/>
    <property type="evidence" value="ECO:0007669"/>
    <property type="project" value="UniProtKB-UniRule"/>
</dbReference>
<dbReference type="GO" id="GO:0006523">
    <property type="term" value="P:alanine biosynthetic process"/>
    <property type="evidence" value="ECO:0007669"/>
    <property type="project" value="InterPro"/>
</dbReference>
<dbReference type="GO" id="GO:0015940">
    <property type="term" value="P:pantothenate biosynthetic process"/>
    <property type="evidence" value="ECO:0007669"/>
    <property type="project" value="UniProtKB-UniRule"/>
</dbReference>
<dbReference type="CDD" id="cd06919">
    <property type="entry name" value="Asp_decarbox"/>
    <property type="match status" value="1"/>
</dbReference>
<dbReference type="FunFam" id="2.40.40.20:FF:000004">
    <property type="entry name" value="Aspartate 1-decarboxylase"/>
    <property type="match status" value="1"/>
</dbReference>
<dbReference type="Gene3D" id="2.40.40.20">
    <property type="match status" value="1"/>
</dbReference>
<dbReference type="HAMAP" id="MF_00446">
    <property type="entry name" value="PanD"/>
    <property type="match status" value="1"/>
</dbReference>
<dbReference type="InterPro" id="IPR009010">
    <property type="entry name" value="Asp_de-COase-like_dom_sf"/>
</dbReference>
<dbReference type="InterPro" id="IPR003190">
    <property type="entry name" value="Asp_decarbox"/>
</dbReference>
<dbReference type="NCBIfam" id="TIGR00223">
    <property type="entry name" value="panD"/>
    <property type="match status" value="1"/>
</dbReference>
<dbReference type="PANTHER" id="PTHR21012">
    <property type="entry name" value="ASPARTATE 1-DECARBOXYLASE"/>
    <property type="match status" value="1"/>
</dbReference>
<dbReference type="PANTHER" id="PTHR21012:SF0">
    <property type="entry name" value="ASPARTATE 1-DECARBOXYLASE"/>
    <property type="match status" value="1"/>
</dbReference>
<dbReference type="Pfam" id="PF02261">
    <property type="entry name" value="Asp_decarbox"/>
    <property type="match status" value="1"/>
</dbReference>
<dbReference type="PIRSF" id="PIRSF006246">
    <property type="entry name" value="Asp_decarbox"/>
    <property type="match status" value="1"/>
</dbReference>
<dbReference type="SUPFAM" id="SSF50692">
    <property type="entry name" value="ADC-like"/>
    <property type="match status" value="1"/>
</dbReference>
<evidence type="ECO:0000255" key="1">
    <source>
        <dbReference type="HAMAP-Rule" id="MF_00446"/>
    </source>
</evidence>
<proteinExistence type="inferred from homology"/>
<reference key="1">
    <citation type="journal article" date="2009" name="PLoS Genet.">
        <title>Organised genome dynamics in the Escherichia coli species results in highly diverse adaptive paths.</title>
        <authorList>
            <person name="Touchon M."/>
            <person name="Hoede C."/>
            <person name="Tenaillon O."/>
            <person name="Barbe V."/>
            <person name="Baeriswyl S."/>
            <person name="Bidet P."/>
            <person name="Bingen E."/>
            <person name="Bonacorsi S."/>
            <person name="Bouchier C."/>
            <person name="Bouvet O."/>
            <person name="Calteau A."/>
            <person name="Chiapello H."/>
            <person name="Clermont O."/>
            <person name="Cruveiller S."/>
            <person name="Danchin A."/>
            <person name="Diard M."/>
            <person name="Dossat C."/>
            <person name="Karoui M.E."/>
            <person name="Frapy E."/>
            <person name="Garry L."/>
            <person name="Ghigo J.M."/>
            <person name="Gilles A.M."/>
            <person name="Johnson J."/>
            <person name="Le Bouguenec C."/>
            <person name="Lescat M."/>
            <person name="Mangenot S."/>
            <person name="Martinez-Jehanne V."/>
            <person name="Matic I."/>
            <person name="Nassif X."/>
            <person name="Oztas S."/>
            <person name="Petit M.A."/>
            <person name="Pichon C."/>
            <person name="Rouy Z."/>
            <person name="Ruf C.S."/>
            <person name="Schneider D."/>
            <person name="Tourret J."/>
            <person name="Vacherie B."/>
            <person name="Vallenet D."/>
            <person name="Medigue C."/>
            <person name="Rocha E.P.C."/>
            <person name="Denamur E."/>
        </authorList>
    </citation>
    <scope>NUCLEOTIDE SEQUENCE [LARGE SCALE GENOMIC DNA]</scope>
    <source>
        <strain>IAI1</strain>
    </source>
</reference>
<sequence length="126" mass="13834">MIRTMLQGKLHRVKVTHADLHYEGSCAIDQDFLDAAGILENEAIDIWNVTNGKRFSTYAIAAERGSRIISVNGAAAHCASVGDIVIIASFVTMPDEEARTWRPNVAYFEGDNEMKRTAKAIPVQVA</sequence>
<feature type="chain" id="PRO_1000192003" description="Aspartate 1-decarboxylase beta chain" evidence="1">
    <location>
        <begin position="1"/>
        <end position="24"/>
    </location>
</feature>
<feature type="chain" id="PRO_1000192004" description="Aspartate 1-decarboxylase alpha chain" evidence="1">
    <location>
        <begin position="25"/>
        <end position="126"/>
    </location>
</feature>
<feature type="active site" description="Schiff-base intermediate with substrate; via pyruvic acid" evidence="1">
    <location>
        <position position="25"/>
    </location>
</feature>
<feature type="active site" description="Proton donor" evidence="1">
    <location>
        <position position="58"/>
    </location>
</feature>
<feature type="binding site" evidence="1">
    <location>
        <position position="57"/>
    </location>
    <ligand>
        <name>substrate</name>
    </ligand>
</feature>
<feature type="binding site" evidence="1">
    <location>
        <begin position="73"/>
        <end position="75"/>
    </location>
    <ligand>
        <name>substrate</name>
    </ligand>
</feature>
<feature type="modified residue" description="Pyruvic acid (Ser)" evidence="1">
    <location>
        <position position="25"/>
    </location>
</feature>
<protein>
    <recommendedName>
        <fullName evidence="1">Aspartate 1-decarboxylase</fullName>
        <ecNumber evidence="1">4.1.1.11</ecNumber>
    </recommendedName>
    <alternativeName>
        <fullName evidence="1">Aspartate alpha-decarboxylase</fullName>
    </alternativeName>
    <component>
        <recommendedName>
            <fullName evidence="1">Aspartate 1-decarboxylase beta chain</fullName>
        </recommendedName>
    </component>
    <component>
        <recommendedName>
            <fullName evidence="1">Aspartate 1-decarboxylase alpha chain</fullName>
        </recommendedName>
    </component>
</protein>
<name>PAND_ECO8A</name>